<comment type="function">
    <text evidence="1">Converts heme B (protoheme IX) to heme O by substitution of the vinyl group on carbon 2 of heme B porphyrin ring with a hydroxyethyl farnesyl side group.</text>
</comment>
<comment type="catalytic activity">
    <reaction evidence="1">
        <text>heme b + (2E,6E)-farnesyl diphosphate + H2O = Fe(II)-heme o + diphosphate</text>
        <dbReference type="Rhea" id="RHEA:28070"/>
        <dbReference type="ChEBI" id="CHEBI:15377"/>
        <dbReference type="ChEBI" id="CHEBI:33019"/>
        <dbReference type="ChEBI" id="CHEBI:60344"/>
        <dbReference type="ChEBI" id="CHEBI:60530"/>
        <dbReference type="ChEBI" id="CHEBI:175763"/>
        <dbReference type="EC" id="2.5.1.141"/>
    </reaction>
</comment>
<comment type="pathway">
    <text evidence="1">Porphyrin-containing compound metabolism; heme O biosynthesis; heme O from protoheme: step 1/1.</text>
</comment>
<comment type="subcellular location">
    <subcellularLocation>
        <location evidence="1">Cell membrane</location>
        <topology evidence="1">Multi-pass membrane protein</topology>
    </subcellularLocation>
</comment>
<comment type="miscellaneous">
    <text evidence="1">Carbon 2 of the heme B porphyrin ring is defined according to the Fischer nomenclature.</text>
</comment>
<comment type="similarity">
    <text evidence="1">Belongs to the UbiA prenyltransferase family. Protoheme IX farnesyltransferase subfamily.</text>
</comment>
<comment type="sequence caution" evidence="2">
    <conflict type="erroneous initiation">
        <sequence resource="EMBL-CDS" id="ABF44711"/>
    </conflict>
</comment>
<keyword id="KW-1003">Cell membrane</keyword>
<keyword id="KW-0350">Heme biosynthesis</keyword>
<keyword id="KW-0472">Membrane</keyword>
<keyword id="KW-0808">Transferase</keyword>
<keyword id="KW-0812">Transmembrane</keyword>
<keyword id="KW-1133">Transmembrane helix</keyword>
<feature type="chain" id="PRO_0000327046" description="Protoheme IX farnesyltransferase">
    <location>
        <begin position="1"/>
        <end position="307"/>
    </location>
</feature>
<feature type="transmembrane region" description="Helical" evidence="1">
    <location>
        <begin position="29"/>
        <end position="49"/>
    </location>
</feature>
<feature type="transmembrane region" description="Helical" evidence="1">
    <location>
        <begin position="51"/>
        <end position="71"/>
    </location>
</feature>
<feature type="transmembrane region" description="Helical" evidence="1">
    <location>
        <begin position="101"/>
        <end position="120"/>
    </location>
</feature>
<feature type="transmembrane region" description="Helical" evidence="1">
    <location>
        <begin position="124"/>
        <end position="143"/>
    </location>
</feature>
<feature type="transmembrane region" description="Helical" evidence="1">
    <location>
        <begin position="151"/>
        <end position="171"/>
    </location>
</feature>
<feature type="transmembrane region" description="Helical" evidence="1">
    <location>
        <begin position="179"/>
        <end position="199"/>
    </location>
</feature>
<feature type="transmembrane region" description="Helical" evidence="1">
    <location>
        <begin position="218"/>
        <end position="238"/>
    </location>
</feature>
<feature type="transmembrane region" description="Helical" evidence="1">
    <location>
        <begin position="239"/>
        <end position="259"/>
    </location>
</feature>
<feature type="transmembrane region" description="Helical" evidence="1">
    <location>
        <begin position="280"/>
        <end position="300"/>
    </location>
</feature>
<dbReference type="EC" id="2.5.1.141" evidence="1"/>
<dbReference type="EMBL" id="CP000359">
    <property type="protein sequence ID" value="ABF44711.1"/>
    <property type="status" value="ALT_INIT"/>
    <property type="molecule type" value="Genomic_DNA"/>
</dbReference>
<dbReference type="SMR" id="Q1J1C3"/>
<dbReference type="STRING" id="319795.Dgeo_0408"/>
<dbReference type="KEGG" id="dge:Dgeo_0408"/>
<dbReference type="eggNOG" id="COG0109">
    <property type="taxonomic scope" value="Bacteria"/>
</dbReference>
<dbReference type="HOGENOM" id="CLU_029631_0_2_0"/>
<dbReference type="UniPathway" id="UPA00834">
    <property type="reaction ID" value="UER00712"/>
</dbReference>
<dbReference type="Proteomes" id="UP000002431">
    <property type="component" value="Chromosome"/>
</dbReference>
<dbReference type="GO" id="GO:0005886">
    <property type="term" value="C:plasma membrane"/>
    <property type="evidence" value="ECO:0007669"/>
    <property type="project" value="UniProtKB-SubCell"/>
</dbReference>
<dbReference type="GO" id="GO:0008495">
    <property type="term" value="F:protoheme IX farnesyltransferase activity"/>
    <property type="evidence" value="ECO:0007669"/>
    <property type="project" value="UniProtKB-UniRule"/>
</dbReference>
<dbReference type="GO" id="GO:0048034">
    <property type="term" value="P:heme O biosynthetic process"/>
    <property type="evidence" value="ECO:0007669"/>
    <property type="project" value="UniProtKB-UniRule"/>
</dbReference>
<dbReference type="CDD" id="cd13957">
    <property type="entry name" value="PT_UbiA_Cox10"/>
    <property type="match status" value="1"/>
</dbReference>
<dbReference type="FunFam" id="1.10.357.140:FF:000001">
    <property type="entry name" value="Protoheme IX farnesyltransferase"/>
    <property type="match status" value="1"/>
</dbReference>
<dbReference type="Gene3D" id="1.10.357.140">
    <property type="entry name" value="UbiA prenyltransferase"/>
    <property type="match status" value="1"/>
</dbReference>
<dbReference type="HAMAP" id="MF_00154">
    <property type="entry name" value="CyoE_CtaB"/>
    <property type="match status" value="1"/>
</dbReference>
<dbReference type="InterPro" id="IPR006369">
    <property type="entry name" value="Protohaem_IX_farnesylTrfase"/>
</dbReference>
<dbReference type="InterPro" id="IPR000537">
    <property type="entry name" value="UbiA_prenyltransferase"/>
</dbReference>
<dbReference type="InterPro" id="IPR030470">
    <property type="entry name" value="UbiA_prenylTrfase_CS"/>
</dbReference>
<dbReference type="InterPro" id="IPR044878">
    <property type="entry name" value="UbiA_sf"/>
</dbReference>
<dbReference type="NCBIfam" id="TIGR01473">
    <property type="entry name" value="cyoE_ctaB"/>
    <property type="match status" value="1"/>
</dbReference>
<dbReference type="NCBIfam" id="NF003349">
    <property type="entry name" value="PRK04375.1-2"/>
    <property type="match status" value="1"/>
</dbReference>
<dbReference type="PANTHER" id="PTHR43448:SF7">
    <property type="entry name" value="4-HYDROXYBENZOATE SOLANESYLTRANSFERASE"/>
    <property type="match status" value="1"/>
</dbReference>
<dbReference type="PANTHER" id="PTHR43448">
    <property type="entry name" value="PROTOHEME IX FARNESYLTRANSFERASE, MITOCHONDRIAL"/>
    <property type="match status" value="1"/>
</dbReference>
<dbReference type="Pfam" id="PF01040">
    <property type="entry name" value="UbiA"/>
    <property type="match status" value="1"/>
</dbReference>
<dbReference type="PROSITE" id="PS00943">
    <property type="entry name" value="UBIA"/>
    <property type="match status" value="1"/>
</dbReference>
<name>COXX_DEIGD</name>
<proteinExistence type="inferred from homology"/>
<evidence type="ECO:0000255" key="1">
    <source>
        <dbReference type="HAMAP-Rule" id="MF_00154"/>
    </source>
</evidence>
<evidence type="ECO:0000305" key="2"/>
<reference key="1">
    <citation type="submission" date="2006-04" db="EMBL/GenBank/DDBJ databases">
        <title>Complete sequence of chromosome of Deinococcus geothermalis DSM 11300.</title>
        <authorList>
            <person name="Copeland A."/>
            <person name="Lucas S."/>
            <person name="Lapidus A."/>
            <person name="Barry K."/>
            <person name="Detter J.C."/>
            <person name="Glavina del Rio T."/>
            <person name="Hammon N."/>
            <person name="Israni S."/>
            <person name="Dalin E."/>
            <person name="Tice H."/>
            <person name="Pitluck S."/>
            <person name="Brettin T."/>
            <person name="Bruce D."/>
            <person name="Han C."/>
            <person name="Tapia R."/>
            <person name="Saunders E."/>
            <person name="Gilna P."/>
            <person name="Schmutz J."/>
            <person name="Larimer F."/>
            <person name="Land M."/>
            <person name="Hauser L."/>
            <person name="Kyrpides N."/>
            <person name="Kim E."/>
            <person name="Daly M.J."/>
            <person name="Fredrickson J.K."/>
            <person name="Makarova K.S."/>
            <person name="Gaidamakova E.K."/>
            <person name="Zhai M."/>
            <person name="Richardson P."/>
        </authorList>
    </citation>
    <scope>NUCLEOTIDE SEQUENCE [LARGE SCALE GENOMIC DNA]</scope>
    <source>
        <strain>DSM 11300 / CIP 105573 / AG-3a</strain>
    </source>
</reference>
<gene>
    <name evidence="1" type="primary">ctaB</name>
    <name type="ordered locus">Dgeo_0408</name>
</gene>
<protein>
    <recommendedName>
        <fullName evidence="1">Protoheme IX farnesyltransferase</fullName>
        <ecNumber evidence="1">2.5.1.141</ecNumber>
    </recommendedName>
    <alternativeName>
        <fullName evidence="1">Heme B farnesyltransferase</fullName>
    </alternativeName>
    <alternativeName>
        <fullName evidence="1">Heme O synthase</fullName>
    </alternativeName>
</protein>
<organism>
    <name type="scientific">Deinococcus geothermalis (strain DSM 11300 / CIP 105573 / AG-3a)</name>
    <dbReference type="NCBI Taxonomy" id="319795"/>
    <lineage>
        <taxon>Bacteria</taxon>
        <taxon>Thermotogati</taxon>
        <taxon>Deinococcota</taxon>
        <taxon>Deinococci</taxon>
        <taxon>Deinococcales</taxon>
        <taxon>Deinococcaceae</taxon>
        <taxon>Deinococcus</taxon>
    </lineage>
</organism>
<sequence length="307" mass="34078">MTPPSGVGHTTRPLRATWRDYLALTKPKVISLLLWTTLTAMFMAARGWPGLGLLVVVSLAGYMSAGSAGVFNMIIDRDIDLRMKRTATRPTSSGLISTRDAAIFGGALQVLSFGMLWVWATPLAAWMSLAGFLTYVVVYTLWLKRNTWHNIVLGGAAGCFPPLVGWAAVTGDLNLFAWFLFAIIFFWTPVHFWALALMIKDEYREVGIPMLPVVHGDRLTVAQIGLYAIYTVVLSVMPVFLGEVGWLYFLSALVLGWLLLQRSWVLYRHVMAGNKVERKVAVPLYLYSMLYLALLFVAGAVDRVLLG</sequence>
<accession>Q1J1C3</accession>